<feature type="chain" id="PRO_0000218082" description="Probable trans-aconitate 2-methyltransferase">
    <location>
        <begin position="1"/>
        <end position="261"/>
    </location>
</feature>
<organism>
    <name type="scientific">Mycobacterium tuberculosis (strain ATCC 25618 / H37Rv)</name>
    <dbReference type="NCBI Taxonomy" id="83332"/>
    <lineage>
        <taxon>Bacteria</taxon>
        <taxon>Bacillati</taxon>
        <taxon>Actinomycetota</taxon>
        <taxon>Actinomycetes</taxon>
        <taxon>Mycobacteriales</taxon>
        <taxon>Mycobacteriaceae</taxon>
        <taxon>Mycobacterium</taxon>
        <taxon>Mycobacterium tuberculosis complex</taxon>
    </lineage>
</organism>
<keyword id="KW-0963">Cytoplasm</keyword>
<keyword id="KW-0489">Methyltransferase</keyword>
<keyword id="KW-1185">Reference proteome</keyword>
<keyword id="KW-0949">S-adenosyl-L-methionine</keyword>
<keyword id="KW-0808">Transferase</keyword>
<accession>P9WGA3</accession>
<accession>L0T4Y3</accession>
<accession>O53698</accession>
<accession>P66885</accession>
<gene>
    <name evidence="1" type="primary">tam</name>
    <name type="ordered locus">Rv0294</name>
    <name type="ORF">MTV035.22</name>
</gene>
<protein>
    <recommendedName>
        <fullName>Probable trans-aconitate 2-methyltransferase</fullName>
        <ecNumber evidence="1">2.1.1.144</ecNumber>
    </recommendedName>
</protein>
<proteinExistence type="evidence at protein level"/>
<name>TAM_MYCTU</name>
<comment type="function">
    <text evidence="1">Catalyzes the S-adenosylmethionine monomethyl esterification of trans-aconitate.</text>
</comment>
<comment type="catalytic activity">
    <reaction evidence="1">
        <text>trans-aconitate + S-adenosyl-L-methionine = (E)-3-(methoxycarbonyl)pent-2-enedioate + S-adenosyl-L-homocysteine</text>
        <dbReference type="Rhea" id="RHEA:14969"/>
        <dbReference type="ChEBI" id="CHEBI:15708"/>
        <dbReference type="ChEBI" id="CHEBI:57470"/>
        <dbReference type="ChEBI" id="CHEBI:57856"/>
        <dbReference type="ChEBI" id="CHEBI:59789"/>
        <dbReference type="EC" id="2.1.1.144"/>
    </reaction>
</comment>
<comment type="subcellular location">
    <subcellularLocation>
        <location evidence="1">Cytoplasm</location>
    </subcellularLocation>
</comment>
<comment type="similarity">
    <text evidence="1">Belongs to the methyltransferase superfamily. Tam family.</text>
</comment>
<reference key="1">
    <citation type="journal article" date="1998" name="Nature">
        <title>Deciphering the biology of Mycobacterium tuberculosis from the complete genome sequence.</title>
        <authorList>
            <person name="Cole S.T."/>
            <person name="Brosch R."/>
            <person name="Parkhill J."/>
            <person name="Garnier T."/>
            <person name="Churcher C.M."/>
            <person name="Harris D.E."/>
            <person name="Gordon S.V."/>
            <person name="Eiglmeier K."/>
            <person name="Gas S."/>
            <person name="Barry C.E. III"/>
            <person name="Tekaia F."/>
            <person name="Badcock K."/>
            <person name="Basham D."/>
            <person name="Brown D."/>
            <person name="Chillingworth T."/>
            <person name="Connor R."/>
            <person name="Davies R.M."/>
            <person name="Devlin K."/>
            <person name="Feltwell T."/>
            <person name="Gentles S."/>
            <person name="Hamlin N."/>
            <person name="Holroyd S."/>
            <person name="Hornsby T."/>
            <person name="Jagels K."/>
            <person name="Krogh A."/>
            <person name="McLean J."/>
            <person name="Moule S."/>
            <person name="Murphy L.D."/>
            <person name="Oliver S."/>
            <person name="Osborne J."/>
            <person name="Quail M.A."/>
            <person name="Rajandream M.A."/>
            <person name="Rogers J."/>
            <person name="Rutter S."/>
            <person name="Seeger K."/>
            <person name="Skelton S."/>
            <person name="Squares S."/>
            <person name="Squares R."/>
            <person name="Sulston J.E."/>
            <person name="Taylor K."/>
            <person name="Whitehead S."/>
            <person name="Barrell B.G."/>
        </authorList>
    </citation>
    <scope>NUCLEOTIDE SEQUENCE [LARGE SCALE GENOMIC DNA]</scope>
    <source>
        <strain>ATCC 25618 / H37Rv</strain>
    </source>
</reference>
<reference key="2">
    <citation type="journal article" date="2011" name="Mol. Cell. Proteomics">
        <title>Proteogenomic analysis of Mycobacterium tuberculosis by high resolution mass spectrometry.</title>
        <authorList>
            <person name="Kelkar D.S."/>
            <person name="Kumar D."/>
            <person name="Kumar P."/>
            <person name="Balakrishnan L."/>
            <person name="Muthusamy B."/>
            <person name="Yadav A.K."/>
            <person name="Shrivastava P."/>
            <person name="Marimuthu A."/>
            <person name="Anand S."/>
            <person name="Sundaram H."/>
            <person name="Kingsbury R."/>
            <person name="Harsha H.C."/>
            <person name="Nair B."/>
            <person name="Prasad T.S."/>
            <person name="Chauhan D.S."/>
            <person name="Katoch K."/>
            <person name="Katoch V.M."/>
            <person name="Kumar P."/>
            <person name="Chaerkady R."/>
            <person name="Ramachandran S."/>
            <person name="Dash D."/>
            <person name="Pandey A."/>
        </authorList>
    </citation>
    <scope>IDENTIFICATION BY MASS SPECTROMETRY [LARGE SCALE ANALYSIS]</scope>
    <source>
        <strain>ATCC 25618 / H37Rv</strain>
    </source>
</reference>
<dbReference type="EC" id="2.1.1.144" evidence="1"/>
<dbReference type="EMBL" id="AL123456">
    <property type="protein sequence ID" value="CCP43024.1"/>
    <property type="molecule type" value="Genomic_DNA"/>
</dbReference>
<dbReference type="PIR" id="D70837">
    <property type="entry name" value="D70837"/>
</dbReference>
<dbReference type="RefSeq" id="NP_214808.1">
    <property type="nucleotide sequence ID" value="NC_000962.3"/>
</dbReference>
<dbReference type="RefSeq" id="WP_003401538.1">
    <property type="nucleotide sequence ID" value="NZ_NVQJ01000026.1"/>
</dbReference>
<dbReference type="SMR" id="P9WGA3"/>
<dbReference type="FunCoup" id="P9WGA3">
    <property type="interactions" value="3"/>
</dbReference>
<dbReference type="STRING" id="83332.Rv0294"/>
<dbReference type="PaxDb" id="83332-Rv0294"/>
<dbReference type="DNASU" id="886593"/>
<dbReference type="GeneID" id="886593"/>
<dbReference type="KEGG" id="mtu:Rv0294"/>
<dbReference type="KEGG" id="mtv:RVBD_0294"/>
<dbReference type="TubercuList" id="Rv0294"/>
<dbReference type="eggNOG" id="COG4106">
    <property type="taxonomic scope" value="Bacteria"/>
</dbReference>
<dbReference type="InParanoid" id="P9WGA3"/>
<dbReference type="OrthoDB" id="9795085at2"/>
<dbReference type="PhylomeDB" id="P9WGA3"/>
<dbReference type="BioCyc" id="MetaCyc:G185E-4417-MONOMER"/>
<dbReference type="Proteomes" id="UP000001584">
    <property type="component" value="Chromosome"/>
</dbReference>
<dbReference type="GO" id="GO:0005737">
    <property type="term" value="C:cytoplasm"/>
    <property type="evidence" value="ECO:0007669"/>
    <property type="project" value="UniProtKB-SubCell"/>
</dbReference>
<dbReference type="GO" id="GO:0030798">
    <property type="term" value="F:trans-aconitate 2-methyltransferase activity"/>
    <property type="evidence" value="ECO:0007669"/>
    <property type="project" value="UniProtKB-UniRule"/>
</dbReference>
<dbReference type="GO" id="GO:0051701">
    <property type="term" value="P:biological process involved in interaction with host"/>
    <property type="evidence" value="ECO:0000315"/>
    <property type="project" value="MTBBASE"/>
</dbReference>
<dbReference type="GO" id="GO:0032259">
    <property type="term" value="P:methylation"/>
    <property type="evidence" value="ECO:0007669"/>
    <property type="project" value="UniProtKB-KW"/>
</dbReference>
<dbReference type="CDD" id="cd02440">
    <property type="entry name" value="AdoMet_MTases"/>
    <property type="match status" value="1"/>
</dbReference>
<dbReference type="Gene3D" id="1.10.150.290">
    <property type="entry name" value="S-adenosyl-L-methionine-dependent methyltransferases"/>
    <property type="match status" value="1"/>
</dbReference>
<dbReference type="Gene3D" id="3.40.50.150">
    <property type="entry name" value="Vaccinia Virus protein VP39"/>
    <property type="match status" value="1"/>
</dbReference>
<dbReference type="HAMAP" id="MF_00560">
    <property type="entry name" value="Tran_acon_Me_trans"/>
    <property type="match status" value="1"/>
</dbReference>
<dbReference type="InterPro" id="IPR041698">
    <property type="entry name" value="Methyltransf_25"/>
</dbReference>
<dbReference type="InterPro" id="IPR029063">
    <property type="entry name" value="SAM-dependent_MTases_sf"/>
</dbReference>
<dbReference type="InterPro" id="IPR023506">
    <property type="entry name" value="Trans-aconitate_MeTrfase"/>
</dbReference>
<dbReference type="InterPro" id="IPR023149">
    <property type="entry name" value="Trans_acon_MeTrfase_C"/>
</dbReference>
<dbReference type="NCBIfam" id="NF010703">
    <property type="entry name" value="PRK14103.1"/>
    <property type="match status" value="1"/>
</dbReference>
<dbReference type="PANTHER" id="PTHR43861:SF1">
    <property type="entry name" value="TRANS-ACONITATE 2-METHYLTRANSFERASE"/>
    <property type="match status" value="1"/>
</dbReference>
<dbReference type="PANTHER" id="PTHR43861">
    <property type="entry name" value="TRANS-ACONITATE 2-METHYLTRANSFERASE-RELATED"/>
    <property type="match status" value="1"/>
</dbReference>
<dbReference type="Pfam" id="PF13649">
    <property type="entry name" value="Methyltransf_25"/>
    <property type="match status" value="1"/>
</dbReference>
<dbReference type="SUPFAM" id="SSF53335">
    <property type="entry name" value="S-adenosyl-L-methionine-dependent methyltransferases"/>
    <property type="match status" value="1"/>
</dbReference>
<sequence length="261" mass="29268">MWDPDVYLAFSGHRNRPFYELVSRVGLERARRVVDLGCGPGHLTRYLARRWPGAVIEALDSSPEMVAAAAERGIDATTGDLRDWKPKPDTDVVVSNAALHWVPEHSDLLVRWVDELAPGSWIAVQIPGNFETPSHAAVRALARREPYAKLMRDIPFRVGAVVQSPAYYAELLMDTGCKVDVWETTYLHQLTGEHPVLDWITGSALVPVRERLSDESWQQFRQELIPLLNDAYPPRADGSTIFPFRRLFMVAEVGGARRSGG</sequence>
<evidence type="ECO:0000255" key="1">
    <source>
        <dbReference type="HAMAP-Rule" id="MF_00560"/>
    </source>
</evidence>